<organism>
    <name type="scientific">Homo sapiens</name>
    <name type="common">Human</name>
    <dbReference type="NCBI Taxonomy" id="9606"/>
    <lineage>
        <taxon>Eukaryota</taxon>
        <taxon>Metazoa</taxon>
        <taxon>Chordata</taxon>
        <taxon>Craniata</taxon>
        <taxon>Vertebrata</taxon>
        <taxon>Euteleostomi</taxon>
        <taxon>Mammalia</taxon>
        <taxon>Eutheria</taxon>
        <taxon>Euarchontoglires</taxon>
        <taxon>Primates</taxon>
        <taxon>Haplorrhini</taxon>
        <taxon>Catarrhini</taxon>
        <taxon>Hominidae</taxon>
        <taxon>Homo</taxon>
    </lineage>
</organism>
<keyword id="KW-1185">Reference proteome</keyword>
<accession>A8MWP4</accession>
<evidence type="ECO:0000256" key="1">
    <source>
        <dbReference type="SAM" id="MobiDB-lite"/>
    </source>
</evidence>
<evidence type="ECO:0000305" key="2"/>
<sequence>MQRPHRRQSQMDAASTRAPPRPSAPQQGRRQPSMPGSAQCHHRPDPHPPAPGKKKSSPVGRFFPASAMAPPWLPGIVSAAQLKPVLSDLPPHCTRAQCQPLTQRPHSLHLQDSRNASSLPHKGWRCNFPLQGPAGLTHKSACVGRMGHCCGSAGNVPELSPRPASPRGQQVTQDGPLQTPELPSECNVGPVMSRQPFPEQSQQGECAIDPRGPPRLELSWGEDPLSGV</sequence>
<protein>
    <recommendedName>
        <fullName>Putative uncharacterized protein ENSP00000401716</fullName>
    </recommendedName>
</protein>
<reference key="1">
    <citation type="journal article" date="2000" name="Nature">
        <title>The DNA sequence of human chromosome 21.</title>
        <authorList>
            <person name="Hattori M."/>
            <person name="Fujiyama A."/>
            <person name="Taylor T.D."/>
            <person name="Watanabe H."/>
            <person name="Yada T."/>
            <person name="Park H.-S."/>
            <person name="Toyoda A."/>
            <person name="Ishii K."/>
            <person name="Totoki Y."/>
            <person name="Choi D.-K."/>
            <person name="Groner Y."/>
            <person name="Soeda E."/>
            <person name="Ohki M."/>
            <person name="Takagi T."/>
            <person name="Sakaki Y."/>
            <person name="Taudien S."/>
            <person name="Blechschmidt K."/>
            <person name="Polley A."/>
            <person name="Menzel U."/>
            <person name="Delabar J."/>
            <person name="Kumpf K."/>
            <person name="Lehmann R."/>
            <person name="Patterson D."/>
            <person name="Reichwald K."/>
            <person name="Rump A."/>
            <person name="Schillhabel M."/>
            <person name="Schudy A."/>
            <person name="Zimmermann W."/>
            <person name="Rosenthal A."/>
            <person name="Kudoh J."/>
            <person name="Shibuya K."/>
            <person name="Kawasaki K."/>
            <person name="Asakawa S."/>
            <person name="Shintani A."/>
            <person name="Sasaki T."/>
            <person name="Nagamine K."/>
            <person name="Mitsuyama S."/>
            <person name="Antonarakis S.E."/>
            <person name="Minoshima S."/>
            <person name="Shimizu N."/>
            <person name="Nordsiek G."/>
            <person name="Hornischer K."/>
            <person name="Brandt P."/>
            <person name="Scharfe M."/>
            <person name="Schoen O."/>
            <person name="Desario A."/>
            <person name="Reichelt J."/>
            <person name="Kauer G."/>
            <person name="Bloecker H."/>
            <person name="Ramser J."/>
            <person name="Beck A."/>
            <person name="Klages S."/>
            <person name="Hennig S."/>
            <person name="Riesselmann L."/>
            <person name="Dagand E."/>
            <person name="Wehrmeyer S."/>
            <person name="Borzym K."/>
            <person name="Gardiner K."/>
            <person name="Nizetic D."/>
            <person name="Francis F."/>
            <person name="Lehrach H."/>
            <person name="Reinhardt R."/>
            <person name="Yaspo M.-L."/>
        </authorList>
    </citation>
    <scope>NUCLEOTIDE SEQUENCE [LARGE SCALE GENOMIC DNA]</scope>
</reference>
<reference key="2">
    <citation type="submission" date="2005-09" db="EMBL/GenBank/DDBJ databases">
        <authorList>
            <person name="Mural R.J."/>
            <person name="Istrail S."/>
            <person name="Sutton G.G."/>
            <person name="Florea L."/>
            <person name="Halpern A.L."/>
            <person name="Mobarry C.M."/>
            <person name="Lippert R."/>
            <person name="Walenz B."/>
            <person name="Shatkay H."/>
            <person name="Dew I."/>
            <person name="Miller J.R."/>
            <person name="Flanigan M.J."/>
            <person name="Edwards N.J."/>
            <person name="Bolanos R."/>
            <person name="Fasulo D."/>
            <person name="Halldorsson B.V."/>
            <person name="Hannenhalli S."/>
            <person name="Turner R."/>
            <person name="Yooseph S."/>
            <person name="Lu F."/>
            <person name="Nusskern D.R."/>
            <person name="Shue B.C."/>
            <person name="Zheng X.H."/>
            <person name="Zhong F."/>
            <person name="Delcher A.L."/>
            <person name="Huson D.H."/>
            <person name="Kravitz S.A."/>
            <person name="Mouchard L."/>
            <person name="Reinert K."/>
            <person name="Remington K.A."/>
            <person name="Clark A.G."/>
            <person name="Waterman M.S."/>
            <person name="Eichler E.E."/>
            <person name="Adams M.D."/>
            <person name="Hunkapiller M.W."/>
            <person name="Myers E.W."/>
            <person name="Venter J.C."/>
        </authorList>
    </citation>
    <scope>NUCLEOTIDE SEQUENCE [LARGE SCALE GENOMIC DNA]</scope>
</reference>
<proteinExistence type="uncertain"/>
<comment type="caution">
    <text evidence="2">Could be the product of a pseudogene.</text>
</comment>
<feature type="chain" id="PRO_0000348246" description="Putative uncharacterized protein ENSP00000401716">
    <location>
        <begin position="1"/>
        <end position="228"/>
    </location>
</feature>
<feature type="region of interest" description="Disordered" evidence="1">
    <location>
        <begin position="1"/>
        <end position="62"/>
    </location>
</feature>
<feature type="region of interest" description="Disordered" evidence="1">
    <location>
        <begin position="160"/>
        <end position="228"/>
    </location>
</feature>
<feature type="compositionally biased region" description="Low complexity" evidence="1">
    <location>
        <begin position="13"/>
        <end position="33"/>
    </location>
</feature>
<feature type="compositionally biased region" description="Polar residues" evidence="1">
    <location>
        <begin position="167"/>
        <end position="176"/>
    </location>
</feature>
<dbReference type="EMBL" id="AP001631">
    <property type="status" value="NOT_ANNOTATED_CDS"/>
    <property type="molecule type" value="Genomic_DNA"/>
</dbReference>
<dbReference type="EMBL" id="CH471079">
    <property type="protein sequence ID" value="EAX09499.1"/>
    <property type="molecule type" value="Genomic_DNA"/>
</dbReference>
<dbReference type="BioMuta" id="-"/>
<dbReference type="neXtProt" id="NX_A8MWP4"/>
<dbReference type="InParanoid" id="A8MWP4"/>
<dbReference type="PAN-GO" id="A8MWP4">
    <property type="GO annotations" value="0 GO annotations based on evolutionary models"/>
</dbReference>
<dbReference type="PhylomeDB" id="A8MWP4"/>
<dbReference type="Pharos" id="A8MWP4">
    <property type="development level" value="Tdark"/>
</dbReference>
<dbReference type="Proteomes" id="UP000005640">
    <property type="component" value="Unplaced"/>
</dbReference>
<dbReference type="RNAct" id="A8MWP4">
    <property type="molecule type" value="protein"/>
</dbReference>
<name>YU008_HUMAN</name>